<accession>Q5XDT7</accession>
<protein>
    <recommendedName>
        <fullName evidence="1">Probable nicotinate-nucleotide adenylyltransferase</fullName>
        <ecNumber evidence="1">2.7.7.18</ecNumber>
    </recommendedName>
    <alternativeName>
        <fullName evidence="1">Deamido-NAD(+) diphosphorylase</fullName>
    </alternativeName>
    <alternativeName>
        <fullName evidence="1">Deamido-NAD(+) pyrophosphorylase</fullName>
    </alternativeName>
    <alternativeName>
        <fullName evidence="1">Nicotinate mononucleotide adenylyltransferase</fullName>
        <shortName evidence="1">NaMN adenylyltransferase</shortName>
    </alternativeName>
</protein>
<reference key="1">
    <citation type="journal article" date="2004" name="J. Infect. Dis.">
        <title>Progress toward characterization of the group A Streptococcus metagenome: complete genome sequence of a macrolide-resistant serotype M6 strain.</title>
        <authorList>
            <person name="Banks D.J."/>
            <person name="Porcella S.F."/>
            <person name="Barbian K.D."/>
            <person name="Beres S.B."/>
            <person name="Philips L.E."/>
            <person name="Voyich J.M."/>
            <person name="DeLeo F.R."/>
            <person name="Martin J.M."/>
            <person name="Somerville G.A."/>
            <person name="Musser J.M."/>
        </authorList>
    </citation>
    <scope>NUCLEOTIDE SEQUENCE [LARGE SCALE GENOMIC DNA]</scope>
    <source>
        <strain>ATCC BAA-946 / MGAS10394</strain>
    </source>
</reference>
<dbReference type="EC" id="2.7.7.18" evidence="1"/>
<dbReference type="EMBL" id="CP000003">
    <property type="protein sequence ID" value="AAT86426.1"/>
    <property type="molecule type" value="Genomic_DNA"/>
</dbReference>
<dbReference type="RefSeq" id="WP_011184179.1">
    <property type="nucleotide sequence ID" value="NC_006086.1"/>
</dbReference>
<dbReference type="SMR" id="Q5XDT7"/>
<dbReference type="KEGG" id="spa:M6_Spy0291"/>
<dbReference type="HOGENOM" id="CLU_069765_3_1_9"/>
<dbReference type="BRENDA" id="2.7.7.18">
    <property type="organism ID" value="5935"/>
</dbReference>
<dbReference type="UniPathway" id="UPA00253">
    <property type="reaction ID" value="UER00332"/>
</dbReference>
<dbReference type="Proteomes" id="UP000001167">
    <property type="component" value="Chromosome"/>
</dbReference>
<dbReference type="GO" id="GO:0005524">
    <property type="term" value="F:ATP binding"/>
    <property type="evidence" value="ECO:0007669"/>
    <property type="project" value="UniProtKB-KW"/>
</dbReference>
<dbReference type="GO" id="GO:0004515">
    <property type="term" value="F:nicotinate-nucleotide adenylyltransferase activity"/>
    <property type="evidence" value="ECO:0007669"/>
    <property type="project" value="UniProtKB-UniRule"/>
</dbReference>
<dbReference type="GO" id="GO:0009435">
    <property type="term" value="P:NAD biosynthetic process"/>
    <property type="evidence" value="ECO:0007669"/>
    <property type="project" value="UniProtKB-UniRule"/>
</dbReference>
<dbReference type="CDD" id="cd02165">
    <property type="entry name" value="NMNAT"/>
    <property type="match status" value="1"/>
</dbReference>
<dbReference type="FunFam" id="3.40.50.620:FF:000079">
    <property type="entry name" value="Probable nicotinate-nucleotide adenylyltransferase"/>
    <property type="match status" value="1"/>
</dbReference>
<dbReference type="Gene3D" id="3.40.50.620">
    <property type="entry name" value="HUPs"/>
    <property type="match status" value="1"/>
</dbReference>
<dbReference type="HAMAP" id="MF_00244">
    <property type="entry name" value="NaMN_adenylyltr"/>
    <property type="match status" value="1"/>
</dbReference>
<dbReference type="InterPro" id="IPR004821">
    <property type="entry name" value="Cyt_trans-like"/>
</dbReference>
<dbReference type="InterPro" id="IPR005248">
    <property type="entry name" value="NadD/NMNAT"/>
</dbReference>
<dbReference type="InterPro" id="IPR014729">
    <property type="entry name" value="Rossmann-like_a/b/a_fold"/>
</dbReference>
<dbReference type="NCBIfam" id="TIGR00125">
    <property type="entry name" value="cyt_tran_rel"/>
    <property type="match status" value="1"/>
</dbReference>
<dbReference type="NCBIfam" id="TIGR00482">
    <property type="entry name" value="nicotinate (nicotinamide) nucleotide adenylyltransferase"/>
    <property type="match status" value="1"/>
</dbReference>
<dbReference type="NCBIfam" id="NF000840">
    <property type="entry name" value="PRK00071.1-3"/>
    <property type="match status" value="1"/>
</dbReference>
<dbReference type="NCBIfam" id="NF000841">
    <property type="entry name" value="PRK00071.1-4"/>
    <property type="match status" value="1"/>
</dbReference>
<dbReference type="PANTHER" id="PTHR39321">
    <property type="entry name" value="NICOTINATE-NUCLEOTIDE ADENYLYLTRANSFERASE-RELATED"/>
    <property type="match status" value="1"/>
</dbReference>
<dbReference type="PANTHER" id="PTHR39321:SF3">
    <property type="entry name" value="PHOSPHOPANTETHEINE ADENYLYLTRANSFERASE"/>
    <property type="match status" value="1"/>
</dbReference>
<dbReference type="Pfam" id="PF01467">
    <property type="entry name" value="CTP_transf_like"/>
    <property type="match status" value="1"/>
</dbReference>
<dbReference type="SUPFAM" id="SSF52374">
    <property type="entry name" value="Nucleotidylyl transferase"/>
    <property type="match status" value="1"/>
</dbReference>
<gene>
    <name evidence="1" type="primary">nadD</name>
    <name type="ordered locus">M6_Spy0291</name>
</gene>
<feature type="chain" id="PRO_0000181457" description="Probable nicotinate-nucleotide adenylyltransferase">
    <location>
        <begin position="1"/>
        <end position="210"/>
    </location>
</feature>
<comment type="function">
    <text evidence="1">Catalyzes the reversible adenylation of nicotinate mononucleotide (NaMN) to nicotinic acid adenine dinucleotide (NaAD).</text>
</comment>
<comment type="catalytic activity">
    <reaction evidence="1">
        <text>nicotinate beta-D-ribonucleotide + ATP + H(+) = deamido-NAD(+) + diphosphate</text>
        <dbReference type="Rhea" id="RHEA:22860"/>
        <dbReference type="ChEBI" id="CHEBI:15378"/>
        <dbReference type="ChEBI" id="CHEBI:30616"/>
        <dbReference type="ChEBI" id="CHEBI:33019"/>
        <dbReference type="ChEBI" id="CHEBI:57502"/>
        <dbReference type="ChEBI" id="CHEBI:58437"/>
        <dbReference type="EC" id="2.7.7.18"/>
    </reaction>
</comment>
<comment type="pathway">
    <text evidence="1">Cofactor biosynthesis; NAD(+) biosynthesis; deamido-NAD(+) from nicotinate D-ribonucleotide: step 1/1.</text>
</comment>
<comment type="similarity">
    <text evidence="1">Belongs to the NadD family.</text>
</comment>
<organism>
    <name type="scientific">Streptococcus pyogenes serotype M6 (strain ATCC BAA-946 / MGAS10394)</name>
    <dbReference type="NCBI Taxonomy" id="286636"/>
    <lineage>
        <taxon>Bacteria</taxon>
        <taxon>Bacillati</taxon>
        <taxon>Bacillota</taxon>
        <taxon>Bacilli</taxon>
        <taxon>Lactobacillales</taxon>
        <taxon>Streptococcaceae</taxon>
        <taxon>Streptococcus</taxon>
    </lineage>
</organism>
<sequence>MALELLTPFTKVELEEEKKESNRKQIGILGGNFNPIHNAHLVVADQVRQQLGLDQVLLMPECKPPHVDAKETIDEKHRLCMLELAIEDVEGLAIETCELERQGISYTYDTMLYLTEQHPDVDYYFIIGADMVDYLPKWHRIDELVKLVQFVGVQRPKYKAGTSYPVIWVDLPLMDISSSMIRDFIKKGRQPNYLLPKRVLDYITQEGLYQ</sequence>
<name>NADD_STRP6</name>
<evidence type="ECO:0000255" key="1">
    <source>
        <dbReference type="HAMAP-Rule" id="MF_00244"/>
    </source>
</evidence>
<keyword id="KW-0067">ATP-binding</keyword>
<keyword id="KW-0520">NAD</keyword>
<keyword id="KW-0547">Nucleotide-binding</keyword>
<keyword id="KW-0548">Nucleotidyltransferase</keyword>
<keyword id="KW-0662">Pyridine nucleotide biosynthesis</keyword>
<keyword id="KW-0808">Transferase</keyword>
<proteinExistence type="inferred from homology"/>